<name>RF2_KINRD</name>
<proteinExistence type="inferred from homology"/>
<feature type="chain" id="PRO_1000093543" description="Peptide chain release factor 2">
    <location>
        <begin position="1"/>
        <end position="367"/>
    </location>
</feature>
<feature type="modified residue" description="N5-methylglutamine" evidence="1">
    <location>
        <position position="250"/>
    </location>
</feature>
<sequence>MAIDFPSEISALRTTYASIREVSDLDALRKELADLNDEAAAPSLWDDPEHAQTVTSRLSAVQAELDRIEKMGGRIDDLEVLVELSEDEHDADSLAEAETELNEVKEQLAQLEVRTLLSGEYDSREAIVTIRSEAGGVDAADFAEMLMRMYLRWAERRGYKSEVYDTSYAEEAGIKSATFKVAAPYAYGTLSVEQGTHRLVRISPFDNQGRRQTSFAGVEVLPVVAETDHVDVPENEVRVDVYRSSGPGGQSVNTTDSAVRLTHLPTGIVVTCQNEKSQLQNKAAAMRVLQAKLLEKARKDRQAELDALKGDDSGSWGNQMRSYVLHPYQMVKDLRTNYEVGNTSSIFDGEIDSFLEAGIRWRKQGES</sequence>
<protein>
    <recommendedName>
        <fullName evidence="1">Peptide chain release factor 2</fullName>
        <shortName evidence="1">RF-2</shortName>
    </recommendedName>
</protein>
<comment type="function">
    <text evidence="1">Peptide chain release factor 2 directs the termination of translation in response to the peptide chain termination codons UGA and UAA.</text>
</comment>
<comment type="subcellular location">
    <subcellularLocation>
        <location evidence="1">Cytoplasm</location>
    </subcellularLocation>
</comment>
<comment type="PTM">
    <text evidence="1">Methylated by PrmC. Methylation increases the termination efficiency of RF2.</text>
</comment>
<comment type="similarity">
    <text evidence="1">Belongs to the prokaryotic/mitochondrial release factor family.</text>
</comment>
<keyword id="KW-0963">Cytoplasm</keyword>
<keyword id="KW-0488">Methylation</keyword>
<keyword id="KW-0648">Protein biosynthesis</keyword>
<keyword id="KW-1185">Reference proteome</keyword>
<evidence type="ECO:0000255" key="1">
    <source>
        <dbReference type="HAMAP-Rule" id="MF_00094"/>
    </source>
</evidence>
<gene>
    <name evidence="1" type="primary">prfB</name>
    <name type="ordered locus">Krad_3782</name>
</gene>
<accession>A6WEK6</accession>
<reference key="1">
    <citation type="journal article" date="2008" name="PLoS ONE">
        <title>Survival in nuclear waste, extreme resistance, and potential applications gleaned from the genome sequence of Kineococcus radiotolerans SRS30216.</title>
        <authorList>
            <person name="Bagwell C.E."/>
            <person name="Bhat S."/>
            <person name="Hawkins G.M."/>
            <person name="Smith B.W."/>
            <person name="Biswas T."/>
            <person name="Hoover T.R."/>
            <person name="Saunders E."/>
            <person name="Han C.S."/>
            <person name="Tsodikov O.V."/>
            <person name="Shimkets L.J."/>
        </authorList>
    </citation>
    <scope>NUCLEOTIDE SEQUENCE [LARGE SCALE GENOMIC DNA]</scope>
    <source>
        <strain>ATCC BAA-149 / DSM 14245 / SRS30216</strain>
    </source>
</reference>
<dbReference type="EMBL" id="CP000750">
    <property type="protein sequence ID" value="ABS05245.1"/>
    <property type="molecule type" value="Genomic_DNA"/>
</dbReference>
<dbReference type="RefSeq" id="WP_012086473.1">
    <property type="nucleotide sequence ID" value="NC_009664.2"/>
</dbReference>
<dbReference type="SMR" id="A6WEK6"/>
<dbReference type="STRING" id="266940.Krad_3782"/>
<dbReference type="KEGG" id="kra:Krad_3782"/>
<dbReference type="eggNOG" id="COG1186">
    <property type="taxonomic scope" value="Bacteria"/>
</dbReference>
<dbReference type="HOGENOM" id="CLU_036856_6_0_11"/>
<dbReference type="OrthoDB" id="9806673at2"/>
<dbReference type="Proteomes" id="UP000001116">
    <property type="component" value="Chromosome"/>
</dbReference>
<dbReference type="GO" id="GO:0005737">
    <property type="term" value="C:cytoplasm"/>
    <property type="evidence" value="ECO:0007669"/>
    <property type="project" value="UniProtKB-SubCell"/>
</dbReference>
<dbReference type="GO" id="GO:0016149">
    <property type="term" value="F:translation release factor activity, codon specific"/>
    <property type="evidence" value="ECO:0007669"/>
    <property type="project" value="UniProtKB-UniRule"/>
</dbReference>
<dbReference type="FunFam" id="3.30.160.20:FF:000010">
    <property type="entry name" value="Peptide chain release factor 2"/>
    <property type="match status" value="1"/>
</dbReference>
<dbReference type="Gene3D" id="3.30.160.20">
    <property type="match status" value="1"/>
</dbReference>
<dbReference type="Gene3D" id="3.30.70.1660">
    <property type="match status" value="1"/>
</dbReference>
<dbReference type="Gene3D" id="1.20.58.410">
    <property type="entry name" value="Release factor"/>
    <property type="match status" value="1"/>
</dbReference>
<dbReference type="HAMAP" id="MF_00094">
    <property type="entry name" value="Rel_fac_2"/>
    <property type="match status" value="1"/>
</dbReference>
<dbReference type="InterPro" id="IPR005139">
    <property type="entry name" value="PCRF"/>
</dbReference>
<dbReference type="InterPro" id="IPR000352">
    <property type="entry name" value="Pep_chain_release_fac_I"/>
</dbReference>
<dbReference type="InterPro" id="IPR045853">
    <property type="entry name" value="Pep_chain_release_fac_I_sf"/>
</dbReference>
<dbReference type="InterPro" id="IPR004374">
    <property type="entry name" value="PrfB"/>
</dbReference>
<dbReference type="NCBIfam" id="TIGR00020">
    <property type="entry name" value="prfB"/>
    <property type="match status" value="1"/>
</dbReference>
<dbReference type="PANTHER" id="PTHR43116:SF3">
    <property type="entry name" value="CLASS I PEPTIDE CHAIN RELEASE FACTOR"/>
    <property type="match status" value="1"/>
</dbReference>
<dbReference type="PANTHER" id="PTHR43116">
    <property type="entry name" value="PEPTIDE CHAIN RELEASE FACTOR 2"/>
    <property type="match status" value="1"/>
</dbReference>
<dbReference type="Pfam" id="PF03462">
    <property type="entry name" value="PCRF"/>
    <property type="match status" value="1"/>
</dbReference>
<dbReference type="Pfam" id="PF00472">
    <property type="entry name" value="RF-1"/>
    <property type="match status" value="1"/>
</dbReference>
<dbReference type="SMART" id="SM00937">
    <property type="entry name" value="PCRF"/>
    <property type="match status" value="1"/>
</dbReference>
<dbReference type="SUPFAM" id="SSF75620">
    <property type="entry name" value="Release factor"/>
    <property type="match status" value="1"/>
</dbReference>
<dbReference type="PROSITE" id="PS00745">
    <property type="entry name" value="RF_PROK_I"/>
    <property type="match status" value="1"/>
</dbReference>
<organism>
    <name type="scientific">Kineococcus radiotolerans (strain ATCC BAA-149 / DSM 14245 / SRS30216)</name>
    <dbReference type="NCBI Taxonomy" id="266940"/>
    <lineage>
        <taxon>Bacteria</taxon>
        <taxon>Bacillati</taxon>
        <taxon>Actinomycetota</taxon>
        <taxon>Actinomycetes</taxon>
        <taxon>Kineosporiales</taxon>
        <taxon>Kineosporiaceae</taxon>
        <taxon>Kineococcus</taxon>
    </lineage>
</organism>